<accession>A4JIU1</accession>
<keyword id="KW-0067">ATP-binding</keyword>
<keyword id="KW-0436">Ligase</keyword>
<keyword id="KW-0479">Metal-binding</keyword>
<keyword id="KW-0547">Nucleotide-binding</keyword>
<keyword id="KW-0671">Queuosine biosynthesis</keyword>
<keyword id="KW-0862">Zinc</keyword>
<organism>
    <name type="scientific">Burkholderia vietnamiensis (strain G4 / LMG 22486)</name>
    <name type="common">Burkholderia cepacia (strain R1808)</name>
    <dbReference type="NCBI Taxonomy" id="269482"/>
    <lineage>
        <taxon>Bacteria</taxon>
        <taxon>Pseudomonadati</taxon>
        <taxon>Pseudomonadota</taxon>
        <taxon>Betaproteobacteria</taxon>
        <taxon>Burkholderiales</taxon>
        <taxon>Burkholderiaceae</taxon>
        <taxon>Burkholderia</taxon>
        <taxon>Burkholderia cepacia complex</taxon>
    </lineage>
</organism>
<protein>
    <recommendedName>
        <fullName evidence="1">7-cyano-7-deazaguanine synthase</fullName>
        <ecNumber evidence="1">6.3.4.20</ecNumber>
    </recommendedName>
    <alternativeName>
        <fullName evidence="1">7-cyano-7-carbaguanine synthase</fullName>
    </alternativeName>
    <alternativeName>
        <fullName evidence="1">PreQ(0) synthase</fullName>
    </alternativeName>
    <alternativeName>
        <fullName evidence="1">Queuosine biosynthesis protein QueC</fullName>
    </alternativeName>
</protein>
<gene>
    <name evidence="1" type="primary">queC</name>
    <name type="ordered locus">Bcep1808_3203</name>
</gene>
<feature type="chain" id="PRO_1000069759" description="7-cyano-7-deazaguanine synthase">
    <location>
        <begin position="1"/>
        <end position="244"/>
    </location>
</feature>
<feature type="binding site" evidence="1">
    <location>
        <begin position="14"/>
        <end position="24"/>
    </location>
    <ligand>
        <name>ATP</name>
        <dbReference type="ChEBI" id="CHEBI:30616"/>
    </ligand>
</feature>
<feature type="binding site" evidence="1">
    <location>
        <position position="202"/>
    </location>
    <ligand>
        <name>Zn(2+)</name>
        <dbReference type="ChEBI" id="CHEBI:29105"/>
    </ligand>
</feature>
<feature type="binding site" evidence="1">
    <location>
        <position position="217"/>
    </location>
    <ligand>
        <name>Zn(2+)</name>
        <dbReference type="ChEBI" id="CHEBI:29105"/>
    </ligand>
</feature>
<feature type="binding site" evidence="1">
    <location>
        <position position="220"/>
    </location>
    <ligand>
        <name>Zn(2+)</name>
        <dbReference type="ChEBI" id="CHEBI:29105"/>
    </ligand>
</feature>
<feature type="binding site" evidence="1">
    <location>
        <position position="223"/>
    </location>
    <ligand>
        <name>Zn(2+)</name>
        <dbReference type="ChEBI" id="CHEBI:29105"/>
    </ligand>
</feature>
<proteinExistence type="inferred from homology"/>
<name>QUEC_BURVG</name>
<reference key="1">
    <citation type="submission" date="2007-03" db="EMBL/GenBank/DDBJ databases">
        <title>Complete sequence of chromosome 1 of Burkholderia vietnamiensis G4.</title>
        <authorList>
            <consortium name="US DOE Joint Genome Institute"/>
            <person name="Copeland A."/>
            <person name="Lucas S."/>
            <person name="Lapidus A."/>
            <person name="Barry K."/>
            <person name="Detter J.C."/>
            <person name="Glavina del Rio T."/>
            <person name="Hammon N."/>
            <person name="Israni S."/>
            <person name="Dalin E."/>
            <person name="Tice H."/>
            <person name="Pitluck S."/>
            <person name="Chain P."/>
            <person name="Malfatti S."/>
            <person name="Shin M."/>
            <person name="Vergez L."/>
            <person name="Schmutz J."/>
            <person name="Larimer F."/>
            <person name="Land M."/>
            <person name="Hauser L."/>
            <person name="Kyrpides N."/>
            <person name="Tiedje J."/>
            <person name="Richardson P."/>
        </authorList>
    </citation>
    <scope>NUCLEOTIDE SEQUENCE [LARGE SCALE GENOMIC DNA]</scope>
    <source>
        <strain>G4 / LMG 22486</strain>
    </source>
</reference>
<evidence type="ECO:0000255" key="1">
    <source>
        <dbReference type="HAMAP-Rule" id="MF_01633"/>
    </source>
</evidence>
<sequence length="244" mass="27034">MIRTDAKDGALVLFSGGQDSATCVAWALERYQTVETLGFDYGQRHRVELECREGVRDALKHRFPAWAGRLGDDHMIDLSVLGAISDTAMTRTIEIETAANGLPNTFVPGRNLLFMTIAAAIAYRRGLRVLVGGMCETDFSGYPDCRDDTMKALQVALNLGMDTRVVLETPLMWLDKAQTWQLAEQLGGAALVELIRVETHTCYVGERAELHDWGFGCGECPACKLRKRGYEAYLKGERVTEAPL</sequence>
<dbReference type="EC" id="6.3.4.20" evidence="1"/>
<dbReference type="EMBL" id="CP000614">
    <property type="protein sequence ID" value="ABO56194.1"/>
    <property type="molecule type" value="Genomic_DNA"/>
</dbReference>
<dbReference type="SMR" id="A4JIU1"/>
<dbReference type="KEGG" id="bvi:Bcep1808_3203"/>
<dbReference type="eggNOG" id="COG0603">
    <property type="taxonomic scope" value="Bacteria"/>
</dbReference>
<dbReference type="HOGENOM" id="CLU_081854_0_0_4"/>
<dbReference type="UniPathway" id="UPA00391"/>
<dbReference type="Proteomes" id="UP000002287">
    <property type="component" value="Chromosome 1"/>
</dbReference>
<dbReference type="GO" id="GO:0005524">
    <property type="term" value="F:ATP binding"/>
    <property type="evidence" value="ECO:0007669"/>
    <property type="project" value="UniProtKB-UniRule"/>
</dbReference>
<dbReference type="GO" id="GO:0016879">
    <property type="term" value="F:ligase activity, forming carbon-nitrogen bonds"/>
    <property type="evidence" value="ECO:0007669"/>
    <property type="project" value="UniProtKB-UniRule"/>
</dbReference>
<dbReference type="GO" id="GO:0008270">
    <property type="term" value="F:zinc ion binding"/>
    <property type="evidence" value="ECO:0007669"/>
    <property type="project" value="UniProtKB-UniRule"/>
</dbReference>
<dbReference type="GO" id="GO:0008616">
    <property type="term" value="P:queuosine biosynthetic process"/>
    <property type="evidence" value="ECO:0007669"/>
    <property type="project" value="UniProtKB-UniRule"/>
</dbReference>
<dbReference type="CDD" id="cd01995">
    <property type="entry name" value="QueC-like"/>
    <property type="match status" value="1"/>
</dbReference>
<dbReference type="Gene3D" id="3.40.50.620">
    <property type="entry name" value="HUPs"/>
    <property type="match status" value="1"/>
</dbReference>
<dbReference type="HAMAP" id="MF_01633">
    <property type="entry name" value="QueC"/>
    <property type="match status" value="1"/>
</dbReference>
<dbReference type="InterPro" id="IPR018317">
    <property type="entry name" value="QueC"/>
</dbReference>
<dbReference type="InterPro" id="IPR014729">
    <property type="entry name" value="Rossmann-like_a/b/a_fold"/>
</dbReference>
<dbReference type="NCBIfam" id="TIGR00364">
    <property type="entry name" value="7-cyano-7-deazaguanine synthase QueC"/>
    <property type="match status" value="1"/>
</dbReference>
<dbReference type="PANTHER" id="PTHR42914">
    <property type="entry name" value="7-CYANO-7-DEAZAGUANINE SYNTHASE"/>
    <property type="match status" value="1"/>
</dbReference>
<dbReference type="PANTHER" id="PTHR42914:SF1">
    <property type="entry name" value="7-CYANO-7-DEAZAGUANINE SYNTHASE"/>
    <property type="match status" value="1"/>
</dbReference>
<dbReference type="Pfam" id="PF06508">
    <property type="entry name" value="QueC"/>
    <property type="match status" value="1"/>
</dbReference>
<dbReference type="PIRSF" id="PIRSF006293">
    <property type="entry name" value="ExsB"/>
    <property type="match status" value="1"/>
</dbReference>
<dbReference type="SUPFAM" id="SSF52402">
    <property type="entry name" value="Adenine nucleotide alpha hydrolases-like"/>
    <property type="match status" value="1"/>
</dbReference>
<comment type="function">
    <text evidence="1">Catalyzes the ATP-dependent conversion of 7-carboxy-7-deazaguanine (CDG) to 7-cyano-7-deazaguanine (preQ(0)).</text>
</comment>
<comment type="catalytic activity">
    <reaction evidence="1">
        <text>7-carboxy-7-deazaguanine + NH4(+) + ATP = 7-cyano-7-deazaguanine + ADP + phosphate + H2O + H(+)</text>
        <dbReference type="Rhea" id="RHEA:27982"/>
        <dbReference type="ChEBI" id="CHEBI:15377"/>
        <dbReference type="ChEBI" id="CHEBI:15378"/>
        <dbReference type="ChEBI" id="CHEBI:28938"/>
        <dbReference type="ChEBI" id="CHEBI:30616"/>
        <dbReference type="ChEBI" id="CHEBI:43474"/>
        <dbReference type="ChEBI" id="CHEBI:45075"/>
        <dbReference type="ChEBI" id="CHEBI:61036"/>
        <dbReference type="ChEBI" id="CHEBI:456216"/>
        <dbReference type="EC" id="6.3.4.20"/>
    </reaction>
</comment>
<comment type="cofactor">
    <cofactor evidence="1">
        <name>Zn(2+)</name>
        <dbReference type="ChEBI" id="CHEBI:29105"/>
    </cofactor>
    <text evidence="1">Binds 1 zinc ion per subunit.</text>
</comment>
<comment type="pathway">
    <text evidence="1">Purine metabolism; 7-cyano-7-deazaguanine biosynthesis.</text>
</comment>
<comment type="similarity">
    <text evidence="1">Belongs to the QueC family.</text>
</comment>